<protein>
    <recommendedName>
        <fullName>Protein FAM50A</fullName>
    </recommendedName>
    <alternativeName>
        <fullName>Protein XAP-5</fullName>
    </alternativeName>
</protein>
<reference key="1">
    <citation type="journal article" date="1999" name="Genomics">
        <title>Human and mouse XAP-5 and XAP-5-like (X5L) genes: identification of an ancient functional retroposon differentially expressed in testis.</title>
        <authorList>
            <person name="Sedlack Z."/>
            <person name="Muenstermann E."/>
            <person name="Dhorne-Pollet S."/>
            <person name="Otto C."/>
            <person name="Bock D."/>
            <person name="Schuetz G."/>
            <person name="Poustka A."/>
        </authorList>
    </citation>
    <scope>NUCLEOTIDE SEQUENCE [MRNA]</scope>
</reference>
<reference key="2">
    <citation type="journal article" date="2005" name="Science">
        <title>The transcriptional landscape of the mammalian genome.</title>
        <authorList>
            <person name="Carninci P."/>
            <person name="Kasukawa T."/>
            <person name="Katayama S."/>
            <person name="Gough J."/>
            <person name="Frith M.C."/>
            <person name="Maeda N."/>
            <person name="Oyama R."/>
            <person name="Ravasi T."/>
            <person name="Lenhard B."/>
            <person name="Wells C."/>
            <person name="Kodzius R."/>
            <person name="Shimokawa K."/>
            <person name="Bajic V.B."/>
            <person name="Brenner S.E."/>
            <person name="Batalov S."/>
            <person name="Forrest A.R."/>
            <person name="Zavolan M."/>
            <person name="Davis M.J."/>
            <person name="Wilming L.G."/>
            <person name="Aidinis V."/>
            <person name="Allen J.E."/>
            <person name="Ambesi-Impiombato A."/>
            <person name="Apweiler R."/>
            <person name="Aturaliya R.N."/>
            <person name="Bailey T.L."/>
            <person name="Bansal M."/>
            <person name="Baxter L."/>
            <person name="Beisel K.W."/>
            <person name="Bersano T."/>
            <person name="Bono H."/>
            <person name="Chalk A.M."/>
            <person name="Chiu K.P."/>
            <person name="Choudhary V."/>
            <person name="Christoffels A."/>
            <person name="Clutterbuck D.R."/>
            <person name="Crowe M.L."/>
            <person name="Dalla E."/>
            <person name="Dalrymple B.P."/>
            <person name="de Bono B."/>
            <person name="Della Gatta G."/>
            <person name="di Bernardo D."/>
            <person name="Down T."/>
            <person name="Engstrom P."/>
            <person name="Fagiolini M."/>
            <person name="Faulkner G."/>
            <person name="Fletcher C.F."/>
            <person name="Fukushima T."/>
            <person name="Furuno M."/>
            <person name="Futaki S."/>
            <person name="Gariboldi M."/>
            <person name="Georgii-Hemming P."/>
            <person name="Gingeras T.R."/>
            <person name="Gojobori T."/>
            <person name="Green R.E."/>
            <person name="Gustincich S."/>
            <person name="Harbers M."/>
            <person name="Hayashi Y."/>
            <person name="Hensch T.K."/>
            <person name="Hirokawa N."/>
            <person name="Hill D."/>
            <person name="Huminiecki L."/>
            <person name="Iacono M."/>
            <person name="Ikeo K."/>
            <person name="Iwama A."/>
            <person name="Ishikawa T."/>
            <person name="Jakt M."/>
            <person name="Kanapin A."/>
            <person name="Katoh M."/>
            <person name="Kawasawa Y."/>
            <person name="Kelso J."/>
            <person name="Kitamura H."/>
            <person name="Kitano H."/>
            <person name="Kollias G."/>
            <person name="Krishnan S.P."/>
            <person name="Kruger A."/>
            <person name="Kummerfeld S.K."/>
            <person name="Kurochkin I.V."/>
            <person name="Lareau L.F."/>
            <person name="Lazarevic D."/>
            <person name="Lipovich L."/>
            <person name="Liu J."/>
            <person name="Liuni S."/>
            <person name="McWilliam S."/>
            <person name="Madan Babu M."/>
            <person name="Madera M."/>
            <person name="Marchionni L."/>
            <person name="Matsuda H."/>
            <person name="Matsuzawa S."/>
            <person name="Miki H."/>
            <person name="Mignone F."/>
            <person name="Miyake S."/>
            <person name="Morris K."/>
            <person name="Mottagui-Tabar S."/>
            <person name="Mulder N."/>
            <person name="Nakano N."/>
            <person name="Nakauchi H."/>
            <person name="Ng P."/>
            <person name="Nilsson R."/>
            <person name="Nishiguchi S."/>
            <person name="Nishikawa S."/>
            <person name="Nori F."/>
            <person name="Ohara O."/>
            <person name="Okazaki Y."/>
            <person name="Orlando V."/>
            <person name="Pang K.C."/>
            <person name="Pavan W.J."/>
            <person name="Pavesi G."/>
            <person name="Pesole G."/>
            <person name="Petrovsky N."/>
            <person name="Piazza S."/>
            <person name="Reed J."/>
            <person name="Reid J.F."/>
            <person name="Ring B.Z."/>
            <person name="Ringwald M."/>
            <person name="Rost B."/>
            <person name="Ruan Y."/>
            <person name="Salzberg S.L."/>
            <person name="Sandelin A."/>
            <person name="Schneider C."/>
            <person name="Schoenbach C."/>
            <person name="Sekiguchi K."/>
            <person name="Semple C.A."/>
            <person name="Seno S."/>
            <person name="Sessa L."/>
            <person name="Sheng Y."/>
            <person name="Shibata Y."/>
            <person name="Shimada H."/>
            <person name="Shimada K."/>
            <person name="Silva D."/>
            <person name="Sinclair B."/>
            <person name="Sperling S."/>
            <person name="Stupka E."/>
            <person name="Sugiura K."/>
            <person name="Sultana R."/>
            <person name="Takenaka Y."/>
            <person name="Taki K."/>
            <person name="Tammoja K."/>
            <person name="Tan S.L."/>
            <person name="Tang S."/>
            <person name="Taylor M.S."/>
            <person name="Tegner J."/>
            <person name="Teichmann S.A."/>
            <person name="Ueda H.R."/>
            <person name="van Nimwegen E."/>
            <person name="Verardo R."/>
            <person name="Wei C.L."/>
            <person name="Yagi K."/>
            <person name="Yamanishi H."/>
            <person name="Zabarovsky E."/>
            <person name="Zhu S."/>
            <person name="Zimmer A."/>
            <person name="Hide W."/>
            <person name="Bult C."/>
            <person name="Grimmond S.M."/>
            <person name="Teasdale R.D."/>
            <person name="Liu E.T."/>
            <person name="Brusic V."/>
            <person name="Quackenbush J."/>
            <person name="Wahlestedt C."/>
            <person name="Mattick J.S."/>
            <person name="Hume D.A."/>
            <person name="Kai C."/>
            <person name="Sasaki D."/>
            <person name="Tomaru Y."/>
            <person name="Fukuda S."/>
            <person name="Kanamori-Katayama M."/>
            <person name="Suzuki M."/>
            <person name="Aoki J."/>
            <person name="Arakawa T."/>
            <person name="Iida J."/>
            <person name="Imamura K."/>
            <person name="Itoh M."/>
            <person name="Kato T."/>
            <person name="Kawaji H."/>
            <person name="Kawagashira N."/>
            <person name="Kawashima T."/>
            <person name="Kojima M."/>
            <person name="Kondo S."/>
            <person name="Konno H."/>
            <person name="Nakano K."/>
            <person name="Ninomiya N."/>
            <person name="Nishio T."/>
            <person name="Okada M."/>
            <person name="Plessy C."/>
            <person name="Shibata K."/>
            <person name="Shiraki T."/>
            <person name="Suzuki S."/>
            <person name="Tagami M."/>
            <person name="Waki K."/>
            <person name="Watahiki A."/>
            <person name="Okamura-Oho Y."/>
            <person name="Suzuki H."/>
            <person name="Kawai J."/>
            <person name="Hayashizaki Y."/>
        </authorList>
    </citation>
    <scope>NUCLEOTIDE SEQUENCE [LARGE SCALE MRNA]</scope>
    <source>
        <strain>C57BL/6J</strain>
        <tissue>Small intestine</tissue>
    </source>
</reference>
<reference key="3">
    <citation type="journal article" date="2010" name="Cell">
        <title>A tissue-specific atlas of mouse protein phosphorylation and expression.</title>
        <authorList>
            <person name="Huttlin E.L."/>
            <person name="Jedrychowski M.P."/>
            <person name="Elias J.E."/>
            <person name="Goswami T."/>
            <person name="Rad R."/>
            <person name="Beausoleil S.A."/>
            <person name="Villen J."/>
            <person name="Haas W."/>
            <person name="Sowa M.E."/>
            <person name="Gygi S.P."/>
        </authorList>
    </citation>
    <scope>IDENTIFICATION BY MASS SPECTROMETRY [LARGE SCALE ANALYSIS]</scope>
    <source>
        <tissue>Spleen</tissue>
    </source>
</reference>
<evidence type="ECO:0000250" key="1">
    <source>
        <dbReference type="UniProtKB" id="Q14320"/>
    </source>
</evidence>
<evidence type="ECO:0000255" key="2"/>
<evidence type="ECO:0000256" key="3">
    <source>
        <dbReference type="SAM" id="MobiDB-lite"/>
    </source>
</evidence>
<evidence type="ECO:0000305" key="4"/>
<name>FA50A_MOUSE</name>
<dbReference type="EMBL" id="Y18505">
    <property type="protein sequence ID" value="CAB46282.1"/>
    <property type="molecule type" value="mRNA"/>
</dbReference>
<dbReference type="EMBL" id="AK008402">
    <property type="protein sequence ID" value="BAB25651.1"/>
    <property type="molecule type" value="mRNA"/>
</dbReference>
<dbReference type="CCDS" id="CCDS41021.1"/>
<dbReference type="RefSeq" id="NP_613073.2">
    <property type="nucleotide sequence ID" value="NM_138607.3"/>
</dbReference>
<dbReference type="RefSeq" id="XP_036017663.1">
    <property type="nucleotide sequence ID" value="XM_036161770.1"/>
</dbReference>
<dbReference type="SMR" id="Q9WV03"/>
<dbReference type="FunCoup" id="Q9WV03">
    <property type="interactions" value="2168"/>
</dbReference>
<dbReference type="STRING" id="10090.ENSMUSP00000109797"/>
<dbReference type="iPTMnet" id="Q9WV03"/>
<dbReference type="PhosphoSitePlus" id="Q9WV03"/>
<dbReference type="jPOST" id="Q9WV03"/>
<dbReference type="PaxDb" id="10090-ENSMUSP00000109797"/>
<dbReference type="PeptideAtlas" id="Q9WV03"/>
<dbReference type="ProteomicsDB" id="271842"/>
<dbReference type="Pumba" id="Q9WV03"/>
<dbReference type="Antibodypedia" id="488">
    <property type="antibodies" value="201 antibodies from 29 providers"/>
</dbReference>
<dbReference type="DNASU" id="108160"/>
<dbReference type="Ensembl" id="ENSMUST00000114160.2">
    <property type="protein sequence ID" value="ENSMUSP00000109797.2"/>
    <property type="gene ID" value="ENSMUSG00000001962.9"/>
</dbReference>
<dbReference type="GeneID" id="108160"/>
<dbReference type="KEGG" id="mmu:108160"/>
<dbReference type="UCSC" id="uc009ton.2">
    <property type="organism name" value="mouse"/>
</dbReference>
<dbReference type="AGR" id="MGI:1351626"/>
<dbReference type="CTD" id="9130"/>
<dbReference type="MGI" id="MGI:1351626">
    <property type="gene designation" value="Fam50a"/>
</dbReference>
<dbReference type="VEuPathDB" id="HostDB:ENSMUSG00000001962"/>
<dbReference type="eggNOG" id="KOG2894">
    <property type="taxonomic scope" value="Eukaryota"/>
</dbReference>
<dbReference type="GeneTree" id="ENSGT00390000004735"/>
<dbReference type="HOGENOM" id="CLU_037985_1_1_1"/>
<dbReference type="InParanoid" id="Q9WV03"/>
<dbReference type="OMA" id="DFIWVFL"/>
<dbReference type="OrthoDB" id="1562195at2759"/>
<dbReference type="PhylomeDB" id="Q9WV03"/>
<dbReference type="TreeFam" id="TF314738"/>
<dbReference type="Reactome" id="R-MMU-72163">
    <property type="pathway name" value="mRNA Splicing - Major Pathway"/>
</dbReference>
<dbReference type="BioGRID-ORCS" id="108160">
    <property type="hits" value="25 hits in 80 CRISPR screens"/>
</dbReference>
<dbReference type="PRO" id="PR:Q9WV03"/>
<dbReference type="Proteomes" id="UP000000589">
    <property type="component" value="Chromosome X"/>
</dbReference>
<dbReference type="RNAct" id="Q9WV03">
    <property type="molecule type" value="protein"/>
</dbReference>
<dbReference type="Bgee" id="ENSMUSG00000001962">
    <property type="expression patterns" value="Expressed in saccule of membranous labyrinth and 266 other cell types or tissues"/>
</dbReference>
<dbReference type="ExpressionAtlas" id="Q9WV03">
    <property type="expression patterns" value="baseline and differential"/>
</dbReference>
<dbReference type="GO" id="GO:0005654">
    <property type="term" value="C:nucleoplasm"/>
    <property type="evidence" value="ECO:0007669"/>
    <property type="project" value="Ensembl"/>
</dbReference>
<dbReference type="GO" id="GO:0006397">
    <property type="term" value="P:mRNA processing"/>
    <property type="evidence" value="ECO:0007669"/>
    <property type="project" value="UniProtKB-KW"/>
</dbReference>
<dbReference type="GO" id="GO:0043484">
    <property type="term" value="P:regulation of RNA splicing"/>
    <property type="evidence" value="ECO:0007669"/>
    <property type="project" value="Ensembl"/>
</dbReference>
<dbReference type="GO" id="GO:0008380">
    <property type="term" value="P:RNA splicing"/>
    <property type="evidence" value="ECO:0007669"/>
    <property type="project" value="UniProtKB-KW"/>
</dbReference>
<dbReference type="InterPro" id="IPR048337">
    <property type="entry name" value="FAM50A/XAP5_C"/>
</dbReference>
<dbReference type="InterPro" id="IPR007005">
    <property type="entry name" value="XAP5"/>
</dbReference>
<dbReference type="PANTHER" id="PTHR12722:SF2">
    <property type="entry name" value="PROTEIN FAM50A"/>
    <property type="match status" value="1"/>
</dbReference>
<dbReference type="PANTHER" id="PTHR12722">
    <property type="entry name" value="XAP-5 PROTEIN-RELATED"/>
    <property type="match status" value="1"/>
</dbReference>
<dbReference type="Pfam" id="PF04921">
    <property type="entry name" value="XAP5"/>
    <property type="match status" value="1"/>
</dbReference>
<keyword id="KW-0007">Acetylation</keyword>
<keyword id="KW-1017">Isopeptide bond</keyword>
<keyword id="KW-0507">mRNA processing</keyword>
<keyword id="KW-0508">mRNA splicing</keyword>
<keyword id="KW-0539">Nucleus</keyword>
<keyword id="KW-1185">Reference proteome</keyword>
<keyword id="KW-0832">Ubl conjugation</keyword>
<comment type="function">
    <text evidence="1">Probably involved in the regulation of pre-mRNA splicing.</text>
</comment>
<comment type="subunit">
    <text evidence="1">Interacts with EFTUD2, a component of the spliceosome U5 complex. Interacts with DDX41, a component of the spliceosome C complex.</text>
</comment>
<comment type="subcellular location">
    <subcellularLocation>
        <location evidence="1">Nucleus</location>
    </subcellularLocation>
</comment>
<comment type="tissue specificity">
    <text>Widely expressed in embryonic and adult tissues.</text>
</comment>
<comment type="similarity">
    <text evidence="4">Belongs to the FAM50 family.</text>
</comment>
<sequence>MAQYKGAASEAGRAMHLMKKREKQREQMEQMKQRIAEENIMKSNIDKKFSAHYDAVEAELKSSTVGLVTLNDMKAKQEALVKEREKQLAKKEQSKELQLKLEKLREKERKKEAKRKISSLSFTLEEEEEGVEEEEEMAMYEEELEREEITTKKKKLGKNPDVDTSFLPDRDREEEENRLREELRQEWEAKQEKIKSEEIEITFSYWDGSGHRRTVKMKKGNTMQQFLQKALEILRKDFSELRSAGVEQLMYIKEDLIIPHHHSFYDFIVTKARGKSGPLFNFDVHDDVRLLSDATVEKDESHAGKVVLRSWYEKNKHIFPASRWEPYDPEKKWDKYTIR</sequence>
<proteinExistence type="evidence at protein level"/>
<accession>Q9WV03</accession>
<accession>Q9D866</accession>
<feature type="initiator methionine" description="Removed" evidence="1">
    <location>
        <position position="1"/>
    </location>
</feature>
<feature type="chain" id="PRO_0000068285" description="Protein FAM50A">
    <location>
        <begin position="2"/>
        <end position="339"/>
    </location>
</feature>
<feature type="region of interest" description="Disordered" evidence="3">
    <location>
        <begin position="1"/>
        <end position="31"/>
    </location>
</feature>
<feature type="region of interest" description="Disordered" evidence="3">
    <location>
        <begin position="150"/>
        <end position="177"/>
    </location>
</feature>
<feature type="short sequence motif" description="Nuclear localization signal" evidence="2">
    <location>
        <begin position="152"/>
        <end position="155"/>
    </location>
</feature>
<feature type="compositionally biased region" description="Basic and acidic residues" evidence="3">
    <location>
        <begin position="168"/>
        <end position="177"/>
    </location>
</feature>
<feature type="modified residue" description="N-acetylalanine" evidence="1">
    <location>
        <position position="2"/>
    </location>
</feature>
<feature type="cross-link" description="Glycyl lysine isopeptide (Lys-Gly) (interchain with G-Cter in SUMO2)" evidence="1">
    <location>
        <position position="100"/>
    </location>
</feature>
<feature type="sequence conflict" description="In Ref. 2; BAB25651." evidence="4" ref="2">
    <original>D</original>
    <variation>Y</variation>
    <location>
        <position position="46"/>
    </location>
</feature>
<organism>
    <name type="scientific">Mus musculus</name>
    <name type="common">Mouse</name>
    <dbReference type="NCBI Taxonomy" id="10090"/>
    <lineage>
        <taxon>Eukaryota</taxon>
        <taxon>Metazoa</taxon>
        <taxon>Chordata</taxon>
        <taxon>Craniata</taxon>
        <taxon>Vertebrata</taxon>
        <taxon>Euteleostomi</taxon>
        <taxon>Mammalia</taxon>
        <taxon>Eutheria</taxon>
        <taxon>Euarchontoglires</taxon>
        <taxon>Glires</taxon>
        <taxon>Rodentia</taxon>
        <taxon>Myomorpha</taxon>
        <taxon>Muroidea</taxon>
        <taxon>Muridae</taxon>
        <taxon>Murinae</taxon>
        <taxon>Mus</taxon>
        <taxon>Mus</taxon>
    </lineage>
</organism>
<gene>
    <name type="primary">Fam50a</name>
    <name type="synonym">D0HXS9928E</name>
    <name type="synonym">Xap5</name>
</gene>